<name>RL16_GLOVI</name>
<proteinExistence type="inferred from homology"/>
<protein>
    <recommendedName>
        <fullName evidence="1">Large ribosomal subunit protein uL16</fullName>
    </recommendedName>
    <alternativeName>
        <fullName evidence="2">50S ribosomal protein L16</fullName>
    </alternativeName>
</protein>
<organism>
    <name type="scientific">Gloeobacter violaceus (strain ATCC 29082 / PCC 7421)</name>
    <dbReference type="NCBI Taxonomy" id="251221"/>
    <lineage>
        <taxon>Bacteria</taxon>
        <taxon>Bacillati</taxon>
        <taxon>Cyanobacteriota</taxon>
        <taxon>Cyanophyceae</taxon>
        <taxon>Gloeobacterales</taxon>
        <taxon>Gloeobacteraceae</taxon>
        <taxon>Gloeobacter</taxon>
    </lineage>
</organism>
<evidence type="ECO:0000255" key="1">
    <source>
        <dbReference type="HAMAP-Rule" id="MF_01342"/>
    </source>
</evidence>
<evidence type="ECO:0000305" key="2"/>
<feature type="chain" id="PRO_0000062109" description="Large ribosomal subunit protein uL16">
    <location>
        <begin position="1"/>
        <end position="148"/>
    </location>
</feature>
<accession>Q7NEF9</accession>
<gene>
    <name evidence="1" type="primary">rplP</name>
    <name evidence="1" type="synonym">rpl16</name>
    <name type="ordered locus">gll3920</name>
</gene>
<dbReference type="EMBL" id="BA000045">
    <property type="protein sequence ID" value="BAC91861.1"/>
    <property type="molecule type" value="Genomic_DNA"/>
</dbReference>
<dbReference type="RefSeq" id="NP_926866.1">
    <property type="nucleotide sequence ID" value="NC_005125.1"/>
</dbReference>
<dbReference type="RefSeq" id="WP_011143908.1">
    <property type="nucleotide sequence ID" value="NC_005125.1"/>
</dbReference>
<dbReference type="SMR" id="Q7NEF9"/>
<dbReference type="FunCoup" id="Q7NEF9">
    <property type="interactions" value="318"/>
</dbReference>
<dbReference type="STRING" id="251221.gene:10761437"/>
<dbReference type="EnsemblBacteria" id="BAC91861">
    <property type="protein sequence ID" value="BAC91861"/>
    <property type="gene ID" value="BAC91861"/>
</dbReference>
<dbReference type="KEGG" id="gvi:gll3920"/>
<dbReference type="PATRIC" id="fig|251221.4.peg.3953"/>
<dbReference type="eggNOG" id="COG0197">
    <property type="taxonomic scope" value="Bacteria"/>
</dbReference>
<dbReference type="HOGENOM" id="CLU_078858_2_1_3"/>
<dbReference type="InParanoid" id="Q7NEF9"/>
<dbReference type="OrthoDB" id="9802589at2"/>
<dbReference type="PhylomeDB" id="Q7NEF9"/>
<dbReference type="Proteomes" id="UP000000557">
    <property type="component" value="Chromosome"/>
</dbReference>
<dbReference type="GO" id="GO:0022625">
    <property type="term" value="C:cytosolic large ribosomal subunit"/>
    <property type="evidence" value="ECO:0000318"/>
    <property type="project" value="GO_Central"/>
</dbReference>
<dbReference type="GO" id="GO:0019843">
    <property type="term" value="F:rRNA binding"/>
    <property type="evidence" value="ECO:0000318"/>
    <property type="project" value="GO_Central"/>
</dbReference>
<dbReference type="GO" id="GO:0003735">
    <property type="term" value="F:structural constituent of ribosome"/>
    <property type="evidence" value="ECO:0000318"/>
    <property type="project" value="GO_Central"/>
</dbReference>
<dbReference type="GO" id="GO:0000049">
    <property type="term" value="F:tRNA binding"/>
    <property type="evidence" value="ECO:0007669"/>
    <property type="project" value="UniProtKB-KW"/>
</dbReference>
<dbReference type="GO" id="GO:0006412">
    <property type="term" value="P:translation"/>
    <property type="evidence" value="ECO:0007669"/>
    <property type="project" value="UniProtKB-UniRule"/>
</dbReference>
<dbReference type="CDD" id="cd01433">
    <property type="entry name" value="Ribosomal_L16_L10e"/>
    <property type="match status" value="1"/>
</dbReference>
<dbReference type="FunFam" id="3.90.1170.10:FF:000001">
    <property type="entry name" value="50S ribosomal protein L16"/>
    <property type="match status" value="1"/>
</dbReference>
<dbReference type="Gene3D" id="3.90.1170.10">
    <property type="entry name" value="Ribosomal protein L10e/L16"/>
    <property type="match status" value="1"/>
</dbReference>
<dbReference type="HAMAP" id="MF_01342">
    <property type="entry name" value="Ribosomal_uL16"/>
    <property type="match status" value="1"/>
</dbReference>
<dbReference type="InterPro" id="IPR047873">
    <property type="entry name" value="Ribosomal_uL16"/>
</dbReference>
<dbReference type="InterPro" id="IPR000114">
    <property type="entry name" value="Ribosomal_uL16_bact-type"/>
</dbReference>
<dbReference type="InterPro" id="IPR020798">
    <property type="entry name" value="Ribosomal_uL16_CS"/>
</dbReference>
<dbReference type="InterPro" id="IPR016180">
    <property type="entry name" value="Ribosomal_uL16_dom"/>
</dbReference>
<dbReference type="InterPro" id="IPR036920">
    <property type="entry name" value="Ribosomal_uL16_sf"/>
</dbReference>
<dbReference type="NCBIfam" id="TIGR01164">
    <property type="entry name" value="rplP_bact"/>
    <property type="match status" value="1"/>
</dbReference>
<dbReference type="PANTHER" id="PTHR12220">
    <property type="entry name" value="50S/60S RIBOSOMAL PROTEIN L16"/>
    <property type="match status" value="1"/>
</dbReference>
<dbReference type="PANTHER" id="PTHR12220:SF13">
    <property type="entry name" value="LARGE RIBOSOMAL SUBUNIT PROTEIN UL16M"/>
    <property type="match status" value="1"/>
</dbReference>
<dbReference type="Pfam" id="PF00252">
    <property type="entry name" value="Ribosomal_L16"/>
    <property type="match status" value="1"/>
</dbReference>
<dbReference type="PRINTS" id="PR00060">
    <property type="entry name" value="RIBOSOMALL16"/>
</dbReference>
<dbReference type="SUPFAM" id="SSF54686">
    <property type="entry name" value="Ribosomal protein L16p/L10e"/>
    <property type="match status" value="1"/>
</dbReference>
<dbReference type="PROSITE" id="PS00586">
    <property type="entry name" value="RIBOSOMAL_L16_1"/>
    <property type="match status" value="1"/>
</dbReference>
<dbReference type="PROSITE" id="PS00701">
    <property type="entry name" value="RIBOSOMAL_L16_2"/>
    <property type="match status" value="1"/>
</dbReference>
<keyword id="KW-1185">Reference proteome</keyword>
<keyword id="KW-0687">Ribonucleoprotein</keyword>
<keyword id="KW-0689">Ribosomal protein</keyword>
<keyword id="KW-0694">RNA-binding</keyword>
<keyword id="KW-0699">rRNA-binding</keyword>
<keyword id="KW-0820">tRNA-binding</keyword>
<reference key="1">
    <citation type="journal article" date="2003" name="DNA Res.">
        <title>Complete genome structure of Gloeobacter violaceus PCC 7421, a cyanobacterium that lacks thylakoids.</title>
        <authorList>
            <person name="Nakamura Y."/>
            <person name="Kaneko T."/>
            <person name="Sato S."/>
            <person name="Mimuro M."/>
            <person name="Miyashita H."/>
            <person name="Tsuchiya T."/>
            <person name="Sasamoto S."/>
            <person name="Watanabe A."/>
            <person name="Kawashima K."/>
            <person name="Kishida Y."/>
            <person name="Kiyokawa C."/>
            <person name="Kohara M."/>
            <person name="Matsumoto M."/>
            <person name="Matsuno A."/>
            <person name="Nakazaki N."/>
            <person name="Shimpo S."/>
            <person name="Takeuchi C."/>
            <person name="Yamada M."/>
            <person name="Tabata S."/>
        </authorList>
    </citation>
    <scope>NUCLEOTIDE SEQUENCE [LARGE SCALE GENOMIC DNA]</scope>
    <source>
        <strain>ATCC 29082 / PCC 7421</strain>
    </source>
</reference>
<sequence>MLMPKRTKFRKQQRGRMNGAACRGNEIEFGTYALQALEPVWMTSRQIEAARRAMTRYIRRGGKIYIRVFPDKPVTQRAAETRMGSGKGAPEYWVCVVKPGRILFEIDGVAEEIAREAMRLAAAKLPIKSRFIVKSETAPAEEPTNAPT</sequence>
<comment type="function">
    <text evidence="1">Binds 23S rRNA and is also seen to make contacts with the A and possibly P site tRNAs.</text>
</comment>
<comment type="subunit">
    <text evidence="1">Part of the 50S ribosomal subunit.</text>
</comment>
<comment type="similarity">
    <text evidence="1">Belongs to the universal ribosomal protein uL16 family.</text>
</comment>